<reference key="1">
    <citation type="submission" date="2007-10" db="EMBL/GenBank/DDBJ databases">
        <title>Complete genome of Alkaliphilus oremlandii OhILAs.</title>
        <authorList>
            <person name="Copeland A."/>
            <person name="Lucas S."/>
            <person name="Lapidus A."/>
            <person name="Barry K."/>
            <person name="Detter J.C."/>
            <person name="Glavina del Rio T."/>
            <person name="Hammon N."/>
            <person name="Israni S."/>
            <person name="Dalin E."/>
            <person name="Tice H."/>
            <person name="Pitluck S."/>
            <person name="Chain P."/>
            <person name="Malfatti S."/>
            <person name="Shin M."/>
            <person name="Vergez L."/>
            <person name="Schmutz J."/>
            <person name="Larimer F."/>
            <person name="Land M."/>
            <person name="Hauser L."/>
            <person name="Kyrpides N."/>
            <person name="Mikhailova N."/>
            <person name="Stolz J.F."/>
            <person name="Dawson A."/>
            <person name="Fisher E."/>
            <person name="Crable B."/>
            <person name="Perera E."/>
            <person name="Lisak J."/>
            <person name="Ranganathan M."/>
            <person name="Basu P."/>
            <person name="Richardson P."/>
        </authorList>
    </citation>
    <scope>NUCLEOTIDE SEQUENCE [LARGE SCALE GENOMIC DNA]</scope>
    <source>
        <strain>OhILAs</strain>
    </source>
</reference>
<evidence type="ECO:0000255" key="1">
    <source>
        <dbReference type="HAMAP-Rule" id="MF_00004"/>
    </source>
</evidence>
<protein>
    <recommendedName>
        <fullName evidence="1">Adenine phosphoribosyltransferase</fullName>
        <shortName evidence="1">APRT</shortName>
        <ecNumber evidence="1">2.4.2.7</ecNumber>
    </recommendedName>
</protein>
<accession>A8MGN2</accession>
<keyword id="KW-0963">Cytoplasm</keyword>
<keyword id="KW-0328">Glycosyltransferase</keyword>
<keyword id="KW-0660">Purine salvage</keyword>
<keyword id="KW-1185">Reference proteome</keyword>
<keyword id="KW-0808">Transferase</keyword>
<organism>
    <name type="scientific">Alkaliphilus oremlandii (strain OhILAs)</name>
    <name type="common">Clostridium oremlandii (strain OhILAs)</name>
    <dbReference type="NCBI Taxonomy" id="350688"/>
    <lineage>
        <taxon>Bacteria</taxon>
        <taxon>Bacillati</taxon>
        <taxon>Bacillota</taxon>
        <taxon>Clostridia</taxon>
        <taxon>Peptostreptococcales</taxon>
        <taxon>Natronincolaceae</taxon>
        <taxon>Alkaliphilus</taxon>
    </lineage>
</organism>
<feature type="chain" id="PRO_1000057028" description="Adenine phosphoribosyltransferase">
    <location>
        <begin position="1"/>
        <end position="172"/>
    </location>
</feature>
<comment type="function">
    <text evidence="1">Catalyzes a salvage reaction resulting in the formation of AMP, that is energically less costly than de novo synthesis.</text>
</comment>
<comment type="catalytic activity">
    <reaction evidence="1">
        <text>AMP + diphosphate = 5-phospho-alpha-D-ribose 1-diphosphate + adenine</text>
        <dbReference type="Rhea" id="RHEA:16609"/>
        <dbReference type="ChEBI" id="CHEBI:16708"/>
        <dbReference type="ChEBI" id="CHEBI:33019"/>
        <dbReference type="ChEBI" id="CHEBI:58017"/>
        <dbReference type="ChEBI" id="CHEBI:456215"/>
        <dbReference type="EC" id="2.4.2.7"/>
    </reaction>
</comment>
<comment type="pathway">
    <text evidence="1">Purine metabolism; AMP biosynthesis via salvage pathway; AMP from adenine: step 1/1.</text>
</comment>
<comment type="subunit">
    <text evidence="1">Homodimer.</text>
</comment>
<comment type="subcellular location">
    <subcellularLocation>
        <location evidence="1">Cytoplasm</location>
    </subcellularLocation>
</comment>
<comment type="similarity">
    <text evidence="1">Belongs to the purine/pyrimidine phosphoribosyltransferase family.</text>
</comment>
<sequence>MDLKSKIRQIEGFPKEGISFKDITTVLKEGEALQYVTDQLTEQLKDLNIDIIVGPEARGFLVGTPVAYKLGVGFVPVRKPGKLPAETLTYEYELEYGTDSLQIHKDSIRPGQRVAIVDDLLATGGTVLATAKMVEALGGQVVSMNFLIELTGLKGRDILKGYEIKSLVEYEF</sequence>
<dbReference type="EC" id="2.4.2.7" evidence="1"/>
<dbReference type="EMBL" id="CP000853">
    <property type="protein sequence ID" value="ABW19255.1"/>
    <property type="molecule type" value="Genomic_DNA"/>
</dbReference>
<dbReference type="RefSeq" id="WP_012159567.1">
    <property type="nucleotide sequence ID" value="NC_009922.1"/>
</dbReference>
<dbReference type="SMR" id="A8MGN2"/>
<dbReference type="STRING" id="350688.Clos_1715"/>
<dbReference type="KEGG" id="aoe:Clos_1715"/>
<dbReference type="eggNOG" id="COG0503">
    <property type="taxonomic scope" value="Bacteria"/>
</dbReference>
<dbReference type="HOGENOM" id="CLU_063339_3_0_9"/>
<dbReference type="OrthoDB" id="9803963at2"/>
<dbReference type="UniPathway" id="UPA00588">
    <property type="reaction ID" value="UER00646"/>
</dbReference>
<dbReference type="Proteomes" id="UP000000269">
    <property type="component" value="Chromosome"/>
</dbReference>
<dbReference type="GO" id="GO:0005737">
    <property type="term" value="C:cytoplasm"/>
    <property type="evidence" value="ECO:0007669"/>
    <property type="project" value="UniProtKB-SubCell"/>
</dbReference>
<dbReference type="GO" id="GO:0002055">
    <property type="term" value="F:adenine binding"/>
    <property type="evidence" value="ECO:0007669"/>
    <property type="project" value="TreeGrafter"/>
</dbReference>
<dbReference type="GO" id="GO:0003999">
    <property type="term" value="F:adenine phosphoribosyltransferase activity"/>
    <property type="evidence" value="ECO:0007669"/>
    <property type="project" value="UniProtKB-UniRule"/>
</dbReference>
<dbReference type="GO" id="GO:0016208">
    <property type="term" value="F:AMP binding"/>
    <property type="evidence" value="ECO:0007669"/>
    <property type="project" value="TreeGrafter"/>
</dbReference>
<dbReference type="GO" id="GO:0006168">
    <property type="term" value="P:adenine salvage"/>
    <property type="evidence" value="ECO:0007669"/>
    <property type="project" value="InterPro"/>
</dbReference>
<dbReference type="GO" id="GO:0044209">
    <property type="term" value="P:AMP salvage"/>
    <property type="evidence" value="ECO:0007669"/>
    <property type="project" value="UniProtKB-UniRule"/>
</dbReference>
<dbReference type="GO" id="GO:0006166">
    <property type="term" value="P:purine ribonucleoside salvage"/>
    <property type="evidence" value="ECO:0007669"/>
    <property type="project" value="UniProtKB-KW"/>
</dbReference>
<dbReference type="CDD" id="cd06223">
    <property type="entry name" value="PRTases_typeI"/>
    <property type="match status" value="1"/>
</dbReference>
<dbReference type="FunFam" id="3.40.50.2020:FF:000004">
    <property type="entry name" value="Adenine phosphoribosyltransferase"/>
    <property type="match status" value="1"/>
</dbReference>
<dbReference type="Gene3D" id="3.40.50.2020">
    <property type="match status" value="1"/>
</dbReference>
<dbReference type="HAMAP" id="MF_00004">
    <property type="entry name" value="Aden_phosphoribosyltr"/>
    <property type="match status" value="1"/>
</dbReference>
<dbReference type="InterPro" id="IPR005764">
    <property type="entry name" value="Ade_phspho_trans"/>
</dbReference>
<dbReference type="InterPro" id="IPR000836">
    <property type="entry name" value="PRibTrfase_dom"/>
</dbReference>
<dbReference type="InterPro" id="IPR029057">
    <property type="entry name" value="PRTase-like"/>
</dbReference>
<dbReference type="InterPro" id="IPR050054">
    <property type="entry name" value="UPRTase/APRTase"/>
</dbReference>
<dbReference type="NCBIfam" id="TIGR01090">
    <property type="entry name" value="apt"/>
    <property type="match status" value="1"/>
</dbReference>
<dbReference type="NCBIfam" id="NF002633">
    <property type="entry name" value="PRK02304.1-2"/>
    <property type="match status" value="1"/>
</dbReference>
<dbReference type="NCBIfam" id="NF002634">
    <property type="entry name" value="PRK02304.1-3"/>
    <property type="match status" value="1"/>
</dbReference>
<dbReference type="NCBIfam" id="NF002636">
    <property type="entry name" value="PRK02304.1-5"/>
    <property type="match status" value="1"/>
</dbReference>
<dbReference type="PANTHER" id="PTHR32315">
    <property type="entry name" value="ADENINE PHOSPHORIBOSYLTRANSFERASE"/>
    <property type="match status" value="1"/>
</dbReference>
<dbReference type="PANTHER" id="PTHR32315:SF3">
    <property type="entry name" value="ADENINE PHOSPHORIBOSYLTRANSFERASE"/>
    <property type="match status" value="1"/>
</dbReference>
<dbReference type="Pfam" id="PF00156">
    <property type="entry name" value="Pribosyltran"/>
    <property type="match status" value="1"/>
</dbReference>
<dbReference type="SUPFAM" id="SSF53271">
    <property type="entry name" value="PRTase-like"/>
    <property type="match status" value="1"/>
</dbReference>
<proteinExistence type="inferred from homology"/>
<gene>
    <name evidence="1" type="primary">apt</name>
    <name type="ordered locus">Clos_1715</name>
</gene>
<name>APT_ALKOO</name>